<feature type="chain" id="PRO_0000239462" description="Embryonic polyadenylate-binding protein 2">
    <location>
        <begin position="1"/>
        <end position="273"/>
    </location>
</feature>
<feature type="domain" description="RRM" evidence="2">
    <location>
        <begin position="143"/>
        <end position="220"/>
    </location>
</feature>
<feature type="region of interest" description="Disordered" evidence="3">
    <location>
        <begin position="22"/>
        <end position="57"/>
    </location>
</feature>
<feature type="sequence conflict" description="In Ref. 3; CA556976." evidence="8" ref="3">
    <original>E</original>
    <variation>V</variation>
    <location>
        <position position="59"/>
    </location>
</feature>
<evidence type="ECO:0000250" key="1">
    <source>
        <dbReference type="UniProtKB" id="Q6TY21"/>
    </source>
</evidence>
<evidence type="ECO:0000255" key="2">
    <source>
        <dbReference type="PROSITE-ProRule" id="PRU00176"/>
    </source>
</evidence>
<evidence type="ECO:0000256" key="3">
    <source>
        <dbReference type="SAM" id="MobiDB-lite"/>
    </source>
</evidence>
<evidence type="ECO:0000269" key="4">
    <source>
    </source>
</evidence>
<evidence type="ECO:0000269" key="5">
    <source>
    </source>
</evidence>
<evidence type="ECO:0000269" key="6">
    <source>
    </source>
</evidence>
<evidence type="ECO:0000269" key="7">
    <source>
    </source>
</evidence>
<evidence type="ECO:0000305" key="8"/>
<evidence type="ECO:0000312" key="9">
    <source>
        <dbReference type="EMBL" id="DAA02003.1"/>
    </source>
</evidence>
<sequence>MEPYLSNELFPPPTEAWLQTVSSDPEAQGWGAWGRTEKTSLVPRAGSRAGSDKEAEENEDASFLLSLLEPENLAKSPVFNQELEAIKLKLWAMEHAEAQPEPPCVQRKATEEERAEVRQLLSPETVDCFFSRTSKENVEADHRSVFVGNVDYGGSAAELEAYFSPCGEIHRVTILCDKFSGHPKGYAYIEFASHRSVKAAVGLDESTFRGRVIKVLPKRTNFPGISSTDRGGLRTHSGNRAAFLHGSLHRKARLRAHGRSRGHGGAPQWFSPY</sequence>
<reference key="1">
    <citation type="journal article" date="2004" name="Genome Res.">
        <title>The status, quality, and expansion of the NIH full-length cDNA project: the Mammalian Gene Collection (MGC).</title>
        <authorList>
            <consortium name="The MGC Project Team"/>
        </authorList>
    </citation>
    <scope>NUCLEOTIDE SEQUENCE [LARGE SCALE MRNA]</scope>
    <source>
        <tissue>Brain</tissue>
    </source>
</reference>
<reference evidence="8" key="2">
    <citation type="journal article" date="2000" name="Proc. Natl. Acad. Sci. U.S.A.">
        <title>Genome-wide expression profiling of mid-gestation placenta and embryo using a 15,000 mouse developmental cDNA microarray.</title>
        <authorList>
            <person name="Tanaka T.S."/>
            <person name="Jaradat S.A."/>
            <person name="Lim M.K."/>
            <person name="Kargul G.J."/>
            <person name="Wang X."/>
            <person name="Grahovac M.J."/>
            <person name="Pantano S."/>
            <person name="Sano Y."/>
            <person name="Piao Y."/>
            <person name="Nagaraja R."/>
            <person name="Doi H."/>
            <person name="Wood W.H. III"/>
            <person name="Becker K.G."/>
            <person name="Ko M.S.H."/>
        </authorList>
    </citation>
    <scope>NUCLEOTIDE SEQUENCE [MRNA] OF 1-207 AND 229-273</scope>
    <source>
        <strain evidence="5">C57BL/6J</strain>
    </source>
</reference>
<reference evidence="8" key="3">
    <citation type="journal article" date="2001" name="Genome Res.">
        <title>Construction of long-transcript enriched cDNA libraries from submicrogram amounts of total RNAs by a universal PCR amplification method.</title>
        <authorList>
            <person name="Piao Y."/>
            <person name="Ko N.T."/>
            <person name="Lim M.K."/>
            <person name="Ko M.S.H."/>
        </authorList>
    </citation>
    <scope>NUCLEOTIDE SEQUENCE [MRNA] OF 1-154 AND 183-273</scope>
    <source>
        <strain evidence="6">C57BL/6J</strain>
        <tissue evidence="6">Egg</tissue>
    </source>
</reference>
<reference evidence="8" key="4">
    <citation type="journal article" date="2000" name="Development">
        <title>Large-scale cDNA analysis reveals phased gene expression patterns during preimplantation mouse development.</title>
        <authorList>
            <person name="Ko M.S.H."/>
            <person name="Kitchen J.R."/>
            <person name="Wang X."/>
            <person name="Threat T.A."/>
            <person name="Wang X."/>
            <person name="Hasegawa A."/>
            <person name="Sun T."/>
            <person name="Grahovac M.J."/>
            <person name="Kargul G.J."/>
            <person name="Lim M.K."/>
            <person name="Cui Y."/>
            <person name="Sano Y."/>
            <person name="Tanaka T.S."/>
            <person name="Liang Y."/>
            <person name="Mason S."/>
            <person name="Paonessa P.D."/>
            <person name="Sauls A.D."/>
            <person name="DePalma G.E."/>
            <person name="Sharara R."/>
            <person name="Rowe L.B."/>
            <person name="Eppig J."/>
            <person name="Morrell C."/>
            <person name="Doi H."/>
        </authorList>
    </citation>
    <scope>NUCLEOTIDE SEQUENCE [MRNA] OF 161-273</scope>
    <source>
        <strain evidence="4">C57BL/6J</strain>
        <tissue evidence="4">Embryo</tissue>
    </source>
</reference>
<reference evidence="8 9" key="5">
    <citation type="journal article" date="2004" name="Genesis">
        <title>Xenopus embryonic poly(A) binding protein 2 (ePABP2) defines a new family of cytoplasmic poly(A) binding proteins expressed during the early stages of vertebrate development.</title>
        <authorList>
            <person name="Good P.J."/>
            <person name="Abler L."/>
            <person name="Herring D."/>
            <person name="Sheets M.D."/>
        </authorList>
    </citation>
    <scope>IDENTIFICATION</scope>
    <scope>DEVELOPMENTAL STAGE</scope>
</reference>
<accession>Q5XFR0</accession>
<accession>B9EJ43</accession>
<keyword id="KW-0963">Cytoplasm</keyword>
<keyword id="KW-1185">Reference proteome</keyword>
<keyword id="KW-0694">RNA-binding</keyword>
<protein>
    <recommendedName>
        <fullName>Embryonic polyadenylate-binding protein 2</fullName>
        <shortName>Embryonic poly(A)-binding protein 2</shortName>
        <shortName>ePABP-2</shortName>
        <shortName>ePABP2</shortName>
    </recommendedName>
    <alternativeName>
        <fullName>Embryonic poly(A)-binding protein type II</fullName>
    </alternativeName>
    <alternativeName>
        <fullName>Poly(A)-binding protein nuclear-like 1</fullName>
    </alternativeName>
</protein>
<name>EPAB2_MOUSE</name>
<organism>
    <name type="scientific">Mus musculus</name>
    <name type="common">Mouse</name>
    <dbReference type="NCBI Taxonomy" id="10090"/>
    <lineage>
        <taxon>Eukaryota</taxon>
        <taxon>Metazoa</taxon>
        <taxon>Chordata</taxon>
        <taxon>Craniata</taxon>
        <taxon>Vertebrata</taxon>
        <taxon>Euteleostomi</taxon>
        <taxon>Mammalia</taxon>
        <taxon>Eutheria</taxon>
        <taxon>Euarchontoglires</taxon>
        <taxon>Glires</taxon>
        <taxon>Rodentia</taxon>
        <taxon>Myomorpha</taxon>
        <taxon>Muroidea</taxon>
        <taxon>Muridae</taxon>
        <taxon>Murinae</taxon>
        <taxon>Mus</taxon>
        <taxon>Mus</taxon>
    </lineage>
</organism>
<dbReference type="EMBL" id="BC141316">
    <property type="protein sequence ID" value="AAI41317.1"/>
    <property type="molecule type" value="mRNA"/>
</dbReference>
<dbReference type="EMBL" id="BC141317">
    <property type="protein sequence ID" value="AAI41318.1"/>
    <property type="molecule type" value="mRNA"/>
</dbReference>
<dbReference type="EMBL" id="BG080308">
    <property type="status" value="NOT_ANNOTATED_CDS"/>
    <property type="molecule type" value="mRNA"/>
</dbReference>
<dbReference type="EMBL" id="BG067238">
    <property type="status" value="NOT_ANNOTATED_CDS"/>
    <property type="molecule type" value="mRNA"/>
</dbReference>
<dbReference type="EMBL" id="CA556976">
    <property type="status" value="NOT_ANNOTATED_CDS"/>
    <property type="molecule type" value="mRNA"/>
</dbReference>
<dbReference type="EMBL" id="BM225984">
    <property type="status" value="NOT_ANNOTATED_CDS"/>
    <property type="molecule type" value="mRNA"/>
</dbReference>
<dbReference type="EMBL" id="C85607">
    <property type="status" value="NOT_ANNOTATED_CDS"/>
    <property type="molecule type" value="mRNA"/>
</dbReference>
<dbReference type="EMBL" id="C85611">
    <property type="status" value="NOT_ANNOTATED_CDS"/>
    <property type="molecule type" value="mRNA"/>
</dbReference>
<dbReference type="EMBL" id="C86787">
    <property type="status" value="NOT_ANNOTATED_CDS"/>
    <property type="molecule type" value="mRNA"/>
</dbReference>
<dbReference type="EMBL" id="BK001615">
    <property type="protein sequence ID" value="DAA02003.1"/>
    <property type="molecule type" value="mRNA"/>
</dbReference>
<dbReference type="CCDS" id="CCDS22743.1"/>
<dbReference type="RefSeq" id="NP_001007463.1">
    <property type="nucleotide sequence ID" value="NM_001007462.1"/>
</dbReference>
<dbReference type="FunCoup" id="Q5XFR0">
    <property type="interactions" value="343"/>
</dbReference>
<dbReference type="STRING" id="10090.ENSMUSP00000090747"/>
<dbReference type="iPTMnet" id="Q5XFR0"/>
<dbReference type="PhosphoSitePlus" id="Q5XFR0"/>
<dbReference type="PaxDb" id="10090-ENSMUSP00000090747"/>
<dbReference type="ProteomicsDB" id="275929"/>
<dbReference type="Antibodypedia" id="50156">
    <property type="antibodies" value="62 antibodies from 12 providers"/>
</dbReference>
<dbReference type="DNASU" id="382035"/>
<dbReference type="Ensembl" id="ENSMUST00000093059.3">
    <property type="protein sequence ID" value="ENSMUSP00000090747.3"/>
    <property type="gene ID" value="ENSMUSG00000069867.4"/>
</dbReference>
<dbReference type="GeneID" id="382035"/>
<dbReference type="KEGG" id="mmu:382035"/>
<dbReference type="UCSC" id="uc009ntk.1">
    <property type="organism name" value="mouse"/>
</dbReference>
<dbReference type="AGR" id="MGI:2685954"/>
<dbReference type="CTD" id="390748"/>
<dbReference type="MGI" id="MGI:2685954">
    <property type="gene designation" value="Pabpn1l"/>
</dbReference>
<dbReference type="VEuPathDB" id="HostDB:ENSMUSG00000069867"/>
<dbReference type="eggNOG" id="KOG4209">
    <property type="taxonomic scope" value="Eukaryota"/>
</dbReference>
<dbReference type="GeneTree" id="ENSGT00940000161325"/>
<dbReference type="HOGENOM" id="CLU_012062_23_2_1"/>
<dbReference type="InParanoid" id="Q5XFR0"/>
<dbReference type="OMA" id="QAEGPPW"/>
<dbReference type="OrthoDB" id="87185at9989"/>
<dbReference type="PhylomeDB" id="Q5XFR0"/>
<dbReference type="TreeFam" id="TF105907"/>
<dbReference type="BioGRID-ORCS" id="382035">
    <property type="hits" value="3 hits in 77 CRISPR screens"/>
</dbReference>
<dbReference type="ChiTaRS" id="Pabpn1l">
    <property type="organism name" value="mouse"/>
</dbReference>
<dbReference type="PRO" id="PR:Q5XFR0"/>
<dbReference type="Proteomes" id="UP000000589">
    <property type="component" value="Chromosome 8"/>
</dbReference>
<dbReference type="RNAct" id="Q5XFR0">
    <property type="molecule type" value="protein"/>
</dbReference>
<dbReference type="Bgee" id="ENSMUSG00000069867">
    <property type="expression patterns" value="Expressed in secondary oocyte and 15 other cell types or tissues"/>
</dbReference>
<dbReference type="ExpressionAtlas" id="Q5XFR0">
    <property type="expression patterns" value="baseline and differential"/>
</dbReference>
<dbReference type="GO" id="GO:0005737">
    <property type="term" value="C:cytoplasm"/>
    <property type="evidence" value="ECO:0000314"/>
    <property type="project" value="MGI"/>
</dbReference>
<dbReference type="GO" id="GO:0005829">
    <property type="term" value="C:cytosol"/>
    <property type="evidence" value="ECO:0000304"/>
    <property type="project" value="Reactome"/>
</dbReference>
<dbReference type="GO" id="GO:0008143">
    <property type="term" value="F:poly(A) binding"/>
    <property type="evidence" value="ECO:0000314"/>
    <property type="project" value="MGI"/>
</dbReference>
<dbReference type="GO" id="GO:0003723">
    <property type="term" value="F:RNA binding"/>
    <property type="evidence" value="ECO:0000314"/>
    <property type="project" value="MGI"/>
</dbReference>
<dbReference type="GO" id="GO:0160021">
    <property type="term" value="P:maternal-to-zygotic transition of gene expression"/>
    <property type="evidence" value="ECO:0000315"/>
    <property type="project" value="MGI"/>
</dbReference>
<dbReference type="GO" id="GO:0031397">
    <property type="term" value="P:negative regulation of protein ubiquitination"/>
    <property type="evidence" value="ECO:0000314"/>
    <property type="project" value="MGI"/>
</dbReference>
<dbReference type="GO" id="GO:0062026">
    <property type="term" value="P:negative regulation of SCF-dependent proteasomal ubiquitin-dependent catabolic process"/>
    <property type="evidence" value="ECO:0000314"/>
    <property type="project" value="MGI"/>
</dbReference>
<dbReference type="GO" id="GO:0000288">
    <property type="term" value="P:nuclear-transcribed mRNA catabolic process, deadenylation-dependent decay"/>
    <property type="evidence" value="ECO:0000315"/>
    <property type="project" value="MGI"/>
</dbReference>
<dbReference type="Gene3D" id="3.30.70.330">
    <property type="match status" value="1"/>
</dbReference>
<dbReference type="InterPro" id="IPR012677">
    <property type="entry name" value="Nucleotide-bd_a/b_plait_sf"/>
</dbReference>
<dbReference type="InterPro" id="IPR035979">
    <property type="entry name" value="RBD_domain_sf"/>
</dbReference>
<dbReference type="InterPro" id="IPR000504">
    <property type="entry name" value="RRM_dom"/>
</dbReference>
<dbReference type="PANTHER" id="PTHR23236:SF27">
    <property type="entry name" value="EMBRYONIC POLYADENYLATE-BINDING PROTEIN 2"/>
    <property type="match status" value="1"/>
</dbReference>
<dbReference type="PANTHER" id="PTHR23236">
    <property type="entry name" value="EUKARYOTIC TRANSLATION INITIATION FACTOR 4B/4H"/>
    <property type="match status" value="1"/>
</dbReference>
<dbReference type="Pfam" id="PF00076">
    <property type="entry name" value="RRM_1"/>
    <property type="match status" value="1"/>
</dbReference>
<dbReference type="SMART" id="SM00360">
    <property type="entry name" value="RRM"/>
    <property type="match status" value="1"/>
</dbReference>
<dbReference type="SUPFAM" id="SSF54928">
    <property type="entry name" value="RNA-binding domain, RBD"/>
    <property type="match status" value="1"/>
</dbReference>
<dbReference type="PROSITE" id="PS50102">
    <property type="entry name" value="RRM"/>
    <property type="match status" value="1"/>
</dbReference>
<comment type="function">
    <text evidence="1">Binds the poly(A) tail of mRNA.</text>
</comment>
<comment type="subcellular location">
    <subcellularLocation>
        <location evidence="1">Cytoplasm</location>
    </subcellularLocation>
</comment>
<comment type="developmental stage">
    <text evidence="7">Expression is restricted to oogenesis, early embryogenesis and the adult ovary.</text>
</comment>
<comment type="sequence caution" evidence="8">
    <conflict type="frameshift">
        <sequence resource="EMBL" id="C85607"/>
    </conflict>
</comment>
<comment type="sequence caution" evidence="8">
    <conflict type="miscellaneous discrepancy">
        <sequence resource="EMBL" id="C85607"/>
    </conflict>
    <text>Deletions and sequence errors.</text>
</comment>
<comment type="sequence caution" evidence="8">
    <conflict type="frameshift">
        <sequence resource="EMBL" id="C85611"/>
    </conflict>
</comment>
<comment type="sequence caution" evidence="8">
    <conflict type="miscellaneous discrepancy">
        <sequence resource="EMBL" id="C85611"/>
    </conflict>
    <text>Deletions and sequence errors.</text>
</comment>
<comment type="sequence caution" evidence="8">
    <conflict type="frameshift">
        <sequence resource="EMBL" id="C86787"/>
    </conflict>
</comment>
<comment type="sequence caution" evidence="8">
    <conflict type="miscellaneous discrepancy">
        <sequence resource="EMBL" id="C86787"/>
    </conflict>
    <text>Deletions and sequence errors.</text>
</comment>
<proteinExistence type="evidence at transcript level"/>
<gene>
    <name type="primary">Pabpn1l</name>
    <name type="synonym">Epabp2</name>
    <name type="synonym">Gm1108</name>
    <name type="synonym">Pabpnl1</name>
</gene>